<feature type="chain" id="PRO_0000111311" description="Small ribosomal subunit protein bS18c">
    <location>
        <begin position="1"/>
        <end position="170"/>
    </location>
</feature>
<feature type="repeat">
    <location>
        <begin position="4"/>
        <end position="10"/>
    </location>
</feature>
<feature type="repeat">
    <location>
        <begin position="11"/>
        <end position="17"/>
    </location>
</feature>
<feature type="repeat">
    <location>
        <begin position="18"/>
        <end position="24"/>
    </location>
</feature>
<feature type="repeat">
    <location>
        <begin position="25"/>
        <end position="31"/>
    </location>
</feature>
<feature type="repeat">
    <location>
        <begin position="32"/>
        <end position="38"/>
    </location>
</feature>
<feature type="repeat">
    <location>
        <begin position="39"/>
        <end position="45"/>
    </location>
</feature>
<feature type="repeat">
    <location>
        <begin position="46"/>
        <end position="52"/>
    </location>
</feature>
<feature type="region of interest" description="Disordered" evidence="1">
    <location>
        <begin position="1"/>
        <end position="60"/>
    </location>
</feature>
<feature type="region of interest" description="7 X 7 AA tandem repeats">
    <location>
        <begin position="4"/>
        <end position="52"/>
    </location>
</feature>
<feature type="region of interest" description="Disordered" evidence="1">
    <location>
        <begin position="149"/>
        <end position="170"/>
    </location>
</feature>
<feature type="compositionally biased region" description="Polar residues" evidence="1">
    <location>
        <begin position="13"/>
        <end position="26"/>
    </location>
</feature>
<feature type="compositionally biased region" description="Basic residues" evidence="1">
    <location>
        <begin position="30"/>
        <end position="55"/>
    </location>
</feature>
<name>RR18_SECCE</name>
<protein>
    <recommendedName>
        <fullName evidence="2">Small ribosomal subunit protein bS18c</fullName>
    </recommendedName>
    <alternativeName>
        <fullName>30S ribosomal protein S18, chloroplastic</fullName>
    </alternativeName>
</protein>
<dbReference type="EMBL" id="X82510">
    <property type="protein sequence ID" value="CAA57883.1"/>
    <property type="molecule type" value="mRNA"/>
</dbReference>
<dbReference type="PIR" id="S61538">
    <property type="entry name" value="S61538"/>
</dbReference>
<dbReference type="RefSeq" id="YP_008239193.1">
    <property type="nucleotide sequence ID" value="NC_021761.1"/>
</dbReference>
<dbReference type="SMR" id="P49170"/>
<dbReference type="GeneID" id="16792710"/>
<dbReference type="GO" id="GO:0009507">
    <property type="term" value="C:chloroplast"/>
    <property type="evidence" value="ECO:0007669"/>
    <property type="project" value="UniProtKB-SubCell"/>
</dbReference>
<dbReference type="GO" id="GO:0005763">
    <property type="term" value="C:mitochondrial small ribosomal subunit"/>
    <property type="evidence" value="ECO:0007669"/>
    <property type="project" value="TreeGrafter"/>
</dbReference>
<dbReference type="GO" id="GO:0070181">
    <property type="term" value="F:small ribosomal subunit rRNA binding"/>
    <property type="evidence" value="ECO:0007669"/>
    <property type="project" value="TreeGrafter"/>
</dbReference>
<dbReference type="GO" id="GO:0003735">
    <property type="term" value="F:structural constituent of ribosome"/>
    <property type="evidence" value="ECO:0007669"/>
    <property type="project" value="InterPro"/>
</dbReference>
<dbReference type="GO" id="GO:0006412">
    <property type="term" value="P:translation"/>
    <property type="evidence" value="ECO:0007669"/>
    <property type="project" value="UniProtKB-UniRule"/>
</dbReference>
<dbReference type="FunFam" id="4.10.640.10:FF:000002">
    <property type="entry name" value="30S ribosomal protein S18, chloroplastic"/>
    <property type="match status" value="1"/>
</dbReference>
<dbReference type="Gene3D" id="4.10.640.10">
    <property type="entry name" value="Ribosomal protein S18"/>
    <property type="match status" value="1"/>
</dbReference>
<dbReference type="HAMAP" id="MF_00270">
    <property type="entry name" value="Ribosomal_bS18"/>
    <property type="match status" value="1"/>
</dbReference>
<dbReference type="InterPro" id="IPR001648">
    <property type="entry name" value="Ribosomal_bS18"/>
</dbReference>
<dbReference type="InterPro" id="IPR018275">
    <property type="entry name" value="Ribosomal_bS18_CS"/>
</dbReference>
<dbReference type="InterPro" id="IPR036870">
    <property type="entry name" value="Ribosomal_bS18_sf"/>
</dbReference>
<dbReference type="NCBIfam" id="TIGR00165">
    <property type="entry name" value="S18"/>
    <property type="match status" value="1"/>
</dbReference>
<dbReference type="PANTHER" id="PTHR13479">
    <property type="entry name" value="30S RIBOSOMAL PROTEIN S18"/>
    <property type="match status" value="1"/>
</dbReference>
<dbReference type="PANTHER" id="PTHR13479:SF40">
    <property type="entry name" value="SMALL RIBOSOMAL SUBUNIT PROTEIN BS18M"/>
    <property type="match status" value="1"/>
</dbReference>
<dbReference type="Pfam" id="PF01084">
    <property type="entry name" value="Ribosomal_S18"/>
    <property type="match status" value="1"/>
</dbReference>
<dbReference type="PRINTS" id="PR00974">
    <property type="entry name" value="RIBOSOMALS18"/>
</dbReference>
<dbReference type="SUPFAM" id="SSF46911">
    <property type="entry name" value="Ribosomal protein S18"/>
    <property type="match status" value="1"/>
</dbReference>
<dbReference type="PROSITE" id="PS00057">
    <property type="entry name" value="RIBOSOMAL_S18"/>
    <property type="match status" value="1"/>
</dbReference>
<sequence>MYTSKQPFLKSKQPFSKSEQPFSKSEQPFRKSKQTFRKFKQPFRKSKQPFRRRPRIGPGDRIDYRNMSLINRFISEQGKILSRRINRLTLKQQRLITLAIKQARILSFLPFRNYENEKQFQAQSISIITGSRPRKNRHIPQLTQKYNSNRNLRNNNQNLRNNNRNLSSDC</sequence>
<organism>
    <name type="scientific">Secale cereale</name>
    <name type="common">Rye</name>
    <dbReference type="NCBI Taxonomy" id="4550"/>
    <lineage>
        <taxon>Eukaryota</taxon>
        <taxon>Viridiplantae</taxon>
        <taxon>Streptophyta</taxon>
        <taxon>Embryophyta</taxon>
        <taxon>Tracheophyta</taxon>
        <taxon>Spermatophyta</taxon>
        <taxon>Magnoliopsida</taxon>
        <taxon>Liliopsida</taxon>
        <taxon>Poales</taxon>
        <taxon>Poaceae</taxon>
        <taxon>BOP clade</taxon>
        <taxon>Pooideae</taxon>
        <taxon>Triticodae</taxon>
        <taxon>Triticeae</taxon>
        <taxon>Hordeinae</taxon>
        <taxon>Secale</taxon>
    </lineage>
</organism>
<proteinExistence type="evidence at transcript level"/>
<keyword id="KW-0150">Chloroplast</keyword>
<keyword id="KW-0934">Plastid</keyword>
<keyword id="KW-0677">Repeat</keyword>
<keyword id="KW-0687">Ribonucleoprotein</keyword>
<keyword id="KW-0689">Ribosomal protein</keyword>
<keyword id="KW-0694">RNA-binding</keyword>
<keyword id="KW-0699">rRNA-binding</keyword>
<comment type="subunit">
    <text>Part of the 30S ribosomal subunit.</text>
</comment>
<comment type="subcellular location">
    <subcellularLocation>
        <location>Plastid</location>
        <location>Chloroplast</location>
    </subcellularLocation>
</comment>
<comment type="similarity">
    <text evidence="2">Belongs to the bacterial ribosomal protein bS18 family.</text>
</comment>
<evidence type="ECO:0000256" key="1">
    <source>
        <dbReference type="SAM" id="MobiDB-lite"/>
    </source>
</evidence>
<evidence type="ECO:0000305" key="2"/>
<reference key="1">
    <citation type="journal article" date="1995" name="Biochem. Mol. Biol. Int.">
        <title>Evolution of the NH2- and COOH-terminal extensions of chloroplast ribosomal protein S18. Nucleotide sequence of pea and rye chloroplast rps 18 genes.</title>
        <authorList>
            <person name="Wegloehner W."/>
            <person name="Kauschmann A."/>
            <person name="Subramanian A.R."/>
        </authorList>
    </citation>
    <scope>NUCLEOTIDE SEQUENCE [MRNA]</scope>
    <source>
        <strain>cv. Halo</strain>
        <tissue>Leaf</tissue>
    </source>
</reference>
<accession>P49170</accession>
<gene>
    <name type="primary">rps18</name>
</gene>
<geneLocation type="chloroplast"/>